<gene>
    <name evidence="1" type="primary">gpmI</name>
    <name type="ordered locus">LHK_02762</name>
</gene>
<dbReference type="EC" id="5.4.2.12" evidence="1"/>
<dbReference type="EMBL" id="CP001154">
    <property type="protein sequence ID" value="ACO75743.1"/>
    <property type="molecule type" value="Genomic_DNA"/>
</dbReference>
<dbReference type="RefSeq" id="WP_012698206.1">
    <property type="nucleotide sequence ID" value="NC_012559.1"/>
</dbReference>
<dbReference type="SMR" id="C1DDB1"/>
<dbReference type="STRING" id="557598.LHK_02762"/>
<dbReference type="KEGG" id="lhk:LHK_02762"/>
<dbReference type="eggNOG" id="COG0696">
    <property type="taxonomic scope" value="Bacteria"/>
</dbReference>
<dbReference type="HOGENOM" id="CLU_026099_2_0_4"/>
<dbReference type="UniPathway" id="UPA00109">
    <property type="reaction ID" value="UER00186"/>
</dbReference>
<dbReference type="Proteomes" id="UP000002010">
    <property type="component" value="Chromosome"/>
</dbReference>
<dbReference type="GO" id="GO:0005829">
    <property type="term" value="C:cytosol"/>
    <property type="evidence" value="ECO:0007669"/>
    <property type="project" value="TreeGrafter"/>
</dbReference>
<dbReference type="GO" id="GO:0030145">
    <property type="term" value="F:manganese ion binding"/>
    <property type="evidence" value="ECO:0007669"/>
    <property type="project" value="UniProtKB-UniRule"/>
</dbReference>
<dbReference type="GO" id="GO:0004619">
    <property type="term" value="F:phosphoglycerate mutase activity"/>
    <property type="evidence" value="ECO:0007669"/>
    <property type="project" value="UniProtKB-EC"/>
</dbReference>
<dbReference type="GO" id="GO:0006007">
    <property type="term" value="P:glucose catabolic process"/>
    <property type="evidence" value="ECO:0007669"/>
    <property type="project" value="InterPro"/>
</dbReference>
<dbReference type="GO" id="GO:0006096">
    <property type="term" value="P:glycolytic process"/>
    <property type="evidence" value="ECO:0007669"/>
    <property type="project" value="UniProtKB-UniRule"/>
</dbReference>
<dbReference type="CDD" id="cd16010">
    <property type="entry name" value="iPGM"/>
    <property type="match status" value="1"/>
</dbReference>
<dbReference type="FunFam" id="3.40.1450.10:FF:000002">
    <property type="entry name" value="2,3-bisphosphoglycerate-independent phosphoglycerate mutase"/>
    <property type="match status" value="1"/>
</dbReference>
<dbReference type="Gene3D" id="3.40.720.10">
    <property type="entry name" value="Alkaline Phosphatase, subunit A"/>
    <property type="match status" value="1"/>
</dbReference>
<dbReference type="Gene3D" id="3.40.1450.10">
    <property type="entry name" value="BPG-independent phosphoglycerate mutase, domain B"/>
    <property type="match status" value="1"/>
</dbReference>
<dbReference type="HAMAP" id="MF_01038">
    <property type="entry name" value="GpmI"/>
    <property type="match status" value="1"/>
</dbReference>
<dbReference type="InterPro" id="IPR017850">
    <property type="entry name" value="Alkaline_phosphatase_core_sf"/>
</dbReference>
<dbReference type="InterPro" id="IPR011258">
    <property type="entry name" value="BPG-indep_PGM_N"/>
</dbReference>
<dbReference type="InterPro" id="IPR006124">
    <property type="entry name" value="Metalloenzyme"/>
</dbReference>
<dbReference type="InterPro" id="IPR036646">
    <property type="entry name" value="PGAM_B_sf"/>
</dbReference>
<dbReference type="InterPro" id="IPR005995">
    <property type="entry name" value="Pgm_bpd_ind"/>
</dbReference>
<dbReference type="NCBIfam" id="TIGR01307">
    <property type="entry name" value="pgm_bpd_ind"/>
    <property type="match status" value="1"/>
</dbReference>
<dbReference type="PANTHER" id="PTHR31637">
    <property type="entry name" value="2,3-BISPHOSPHOGLYCERATE-INDEPENDENT PHOSPHOGLYCERATE MUTASE"/>
    <property type="match status" value="1"/>
</dbReference>
<dbReference type="PANTHER" id="PTHR31637:SF0">
    <property type="entry name" value="2,3-BISPHOSPHOGLYCERATE-INDEPENDENT PHOSPHOGLYCERATE MUTASE"/>
    <property type="match status" value="1"/>
</dbReference>
<dbReference type="Pfam" id="PF06415">
    <property type="entry name" value="iPGM_N"/>
    <property type="match status" value="1"/>
</dbReference>
<dbReference type="Pfam" id="PF01676">
    <property type="entry name" value="Metalloenzyme"/>
    <property type="match status" value="1"/>
</dbReference>
<dbReference type="PIRSF" id="PIRSF001492">
    <property type="entry name" value="IPGAM"/>
    <property type="match status" value="1"/>
</dbReference>
<dbReference type="SUPFAM" id="SSF64158">
    <property type="entry name" value="2,3-Bisphosphoglycerate-independent phosphoglycerate mutase, substrate-binding domain"/>
    <property type="match status" value="1"/>
</dbReference>
<dbReference type="SUPFAM" id="SSF53649">
    <property type="entry name" value="Alkaline phosphatase-like"/>
    <property type="match status" value="1"/>
</dbReference>
<proteinExistence type="inferred from homology"/>
<accession>C1DDB1</accession>
<evidence type="ECO:0000255" key="1">
    <source>
        <dbReference type="HAMAP-Rule" id="MF_01038"/>
    </source>
</evidence>
<sequence>MKSVTPVLLLILDGFGHRLDGDDNAIALARTPNWDRLRRDHPYGTIDASERAVGLPRGQFGNSEVGHLNIGAGRIVTQDISRIDLDLEEQRFAGNPAFTHAFAAARGHALHILGLLSDGGVHSHENHIHALIRAAQAAGVADIRVHAFLDGRDTPPRSARTYLERLDAVLAECPNARLATVCGRYFAMDRDKRWERVEQAYRLIVDGEAAFQADDGLSALAAAYARDENDEFVRATRIGAPAPMQDGDAVIFMNFRADRARELTSALTDPEFDGFSARQLRLSDYVTLTRYGADYASLSIAYPPQTIRNGFGEYLASQGLRQLRIAETEKYPHVTYFFNGGEETVYPGEDRILVPSPKVATYDLQPEMSAEEVTNRIVEAINSRQYQAIICNYANGDMVGHTGNLPAAIRAVETLDGCINRCVEAMLANGGEVLITADHGNCEQMDDPLHQQPHTQHTTNLVPLCYVGHRPARILEGGALKDIAPTLLALMGLPAPDDMTGHSLVELL</sequence>
<feature type="chain" id="PRO_1000149489" description="2,3-bisphosphoglycerate-independent phosphoglycerate mutase">
    <location>
        <begin position="1"/>
        <end position="508"/>
    </location>
</feature>
<feature type="active site" description="Phosphoserine intermediate" evidence="1">
    <location>
        <position position="63"/>
    </location>
</feature>
<feature type="binding site" evidence="1">
    <location>
        <position position="13"/>
    </location>
    <ligand>
        <name>Mn(2+)</name>
        <dbReference type="ChEBI" id="CHEBI:29035"/>
        <label>2</label>
    </ligand>
</feature>
<feature type="binding site" evidence="1">
    <location>
        <position position="63"/>
    </location>
    <ligand>
        <name>Mn(2+)</name>
        <dbReference type="ChEBI" id="CHEBI:29035"/>
        <label>2</label>
    </ligand>
</feature>
<feature type="binding site" evidence="1">
    <location>
        <position position="122"/>
    </location>
    <ligand>
        <name>substrate</name>
    </ligand>
</feature>
<feature type="binding site" evidence="1">
    <location>
        <begin position="152"/>
        <end position="153"/>
    </location>
    <ligand>
        <name>substrate</name>
    </ligand>
</feature>
<feature type="binding site" evidence="1">
    <location>
        <position position="184"/>
    </location>
    <ligand>
        <name>substrate</name>
    </ligand>
</feature>
<feature type="binding site" evidence="1">
    <location>
        <position position="190"/>
    </location>
    <ligand>
        <name>substrate</name>
    </ligand>
</feature>
<feature type="binding site" evidence="1">
    <location>
        <begin position="256"/>
        <end position="259"/>
    </location>
    <ligand>
        <name>substrate</name>
    </ligand>
</feature>
<feature type="binding site" evidence="1">
    <location>
        <position position="330"/>
    </location>
    <ligand>
        <name>substrate</name>
    </ligand>
</feature>
<feature type="binding site" evidence="1">
    <location>
        <position position="397"/>
    </location>
    <ligand>
        <name>Mn(2+)</name>
        <dbReference type="ChEBI" id="CHEBI:29035"/>
        <label>1</label>
    </ligand>
</feature>
<feature type="binding site" evidence="1">
    <location>
        <position position="401"/>
    </location>
    <ligand>
        <name>Mn(2+)</name>
        <dbReference type="ChEBI" id="CHEBI:29035"/>
        <label>1</label>
    </ligand>
</feature>
<feature type="binding site" evidence="1">
    <location>
        <position position="438"/>
    </location>
    <ligand>
        <name>Mn(2+)</name>
        <dbReference type="ChEBI" id="CHEBI:29035"/>
        <label>2</label>
    </ligand>
</feature>
<feature type="binding site" evidence="1">
    <location>
        <position position="439"/>
    </location>
    <ligand>
        <name>Mn(2+)</name>
        <dbReference type="ChEBI" id="CHEBI:29035"/>
        <label>2</label>
    </ligand>
</feature>
<feature type="binding site" evidence="1">
    <location>
        <position position="457"/>
    </location>
    <ligand>
        <name>Mn(2+)</name>
        <dbReference type="ChEBI" id="CHEBI:29035"/>
        <label>1</label>
    </ligand>
</feature>
<reference key="1">
    <citation type="journal article" date="2009" name="PLoS Genet.">
        <title>The complete genome and proteome of Laribacter hongkongensis reveal potential mechanisms for adaptations to different temperatures and habitats.</title>
        <authorList>
            <person name="Woo P.C.Y."/>
            <person name="Lau S.K.P."/>
            <person name="Tse H."/>
            <person name="Teng J.L.L."/>
            <person name="Curreem S.O."/>
            <person name="Tsang A.K.L."/>
            <person name="Fan R.Y.Y."/>
            <person name="Wong G.K.M."/>
            <person name="Huang Y."/>
            <person name="Loman N.J."/>
            <person name="Snyder L.A.S."/>
            <person name="Cai J.J."/>
            <person name="Huang J.-D."/>
            <person name="Mak W."/>
            <person name="Pallen M.J."/>
            <person name="Lok S."/>
            <person name="Yuen K.-Y."/>
        </authorList>
    </citation>
    <scope>NUCLEOTIDE SEQUENCE [LARGE SCALE GENOMIC DNA]</scope>
    <source>
        <strain>HLHK9</strain>
    </source>
</reference>
<comment type="function">
    <text evidence="1">Catalyzes the interconversion of 2-phosphoglycerate and 3-phosphoglycerate.</text>
</comment>
<comment type="catalytic activity">
    <reaction evidence="1">
        <text>(2R)-2-phosphoglycerate = (2R)-3-phosphoglycerate</text>
        <dbReference type="Rhea" id="RHEA:15901"/>
        <dbReference type="ChEBI" id="CHEBI:58272"/>
        <dbReference type="ChEBI" id="CHEBI:58289"/>
        <dbReference type="EC" id="5.4.2.12"/>
    </reaction>
</comment>
<comment type="cofactor">
    <cofactor evidence="1">
        <name>Mn(2+)</name>
        <dbReference type="ChEBI" id="CHEBI:29035"/>
    </cofactor>
    <text evidence="1">Binds 2 manganese ions per subunit.</text>
</comment>
<comment type="pathway">
    <text evidence="1">Carbohydrate degradation; glycolysis; pyruvate from D-glyceraldehyde 3-phosphate: step 3/5.</text>
</comment>
<comment type="subunit">
    <text evidence="1">Monomer.</text>
</comment>
<comment type="similarity">
    <text evidence="1">Belongs to the BPG-independent phosphoglycerate mutase family.</text>
</comment>
<keyword id="KW-0324">Glycolysis</keyword>
<keyword id="KW-0413">Isomerase</keyword>
<keyword id="KW-0464">Manganese</keyword>
<keyword id="KW-0479">Metal-binding</keyword>
<keyword id="KW-1185">Reference proteome</keyword>
<organism>
    <name type="scientific">Laribacter hongkongensis (strain HLHK9)</name>
    <dbReference type="NCBI Taxonomy" id="557598"/>
    <lineage>
        <taxon>Bacteria</taxon>
        <taxon>Pseudomonadati</taxon>
        <taxon>Pseudomonadota</taxon>
        <taxon>Betaproteobacteria</taxon>
        <taxon>Neisseriales</taxon>
        <taxon>Aquaspirillaceae</taxon>
        <taxon>Laribacter</taxon>
    </lineage>
</organism>
<name>GPMI_LARHH</name>
<protein>
    <recommendedName>
        <fullName evidence="1">2,3-bisphosphoglycerate-independent phosphoglycerate mutase</fullName>
        <shortName evidence="1">BPG-independent PGAM</shortName>
        <shortName evidence="1">Phosphoglyceromutase</shortName>
        <shortName evidence="1">iPGM</shortName>
        <ecNumber evidence="1">5.4.2.12</ecNumber>
    </recommendedName>
</protein>